<sequence length="314" mass="36100">MFDGIMPLIGSLLLVICVMVGVAFLTLLERKVLGYIQIRKGPNKVGFNGLLQPFSDAVKLFTKEQTYPLLSNYISYYFSPVFSLFLSLLIWMCIPYLIKLYSFNLGVLFFLCCTSLGVYTVMIAGWSSNSNYALLGGLRAVAQTISYEVSLALILLSFIFLVGNYNFLSFYFYQDYVWFIFFCFPLGLVWLASCLAETNRTPFDFAEGESELVSGFNVEYSSGGFALIFLAEYSSILFMSMLFVVIFLGSDIYSFMFFLKLSFISFIFIWVRGTLPRFRYDKLMYLAWKSFLPLSLNYLFFFVGLKIFFISLLF</sequence>
<evidence type="ECO:0000250" key="1"/>
<evidence type="ECO:0000255" key="2"/>
<evidence type="ECO:0000305" key="3"/>
<reference key="1">
    <citation type="journal article" date="1993" name="Insect Mol. Biol.">
        <title>The mitochondrial genome of the mosquito Anopheles gambiae: DNA sequence, genome organization, and comparisons with mitochondrial sequences of other insects.</title>
        <authorList>
            <person name="Beard C.B."/>
            <person name="Hamm D.M."/>
            <person name="Collins F.H."/>
        </authorList>
    </citation>
    <scope>NUCLEOTIDE SEQUENCE [LARGE SCALE GENOMIC DNA]</scope>
    <source>
        <strain>G3</strain>
    </source>
</reference>
<comment type="function">
    <text evidence="1">Core subunit of the mitochondrial membrane respiratory chain NADH dehydrogenase (Complex I) that is believed to belong to the minimal assembly required for catalysis. Complex I functions in the transfer of electrons from NADH to the respiratory chain. The immediate electron acceptor for the enzyme is believed to be ubiquinone (By similarity).</text>
</comment>
<comment type="catalytic activity">
    <reaction>
        <text>a ubiquinone + NADH + 5 H(+)(in) = a ubiquinol + NAD(+) + 4 H(+)(out)</text>
        <dbReference type="Rhea" id="RHEA:29091"/>
        <dbReference type="Rhea" id="RHEA-COMP:9565"/>
        <dbReference type="Rhea" id="RHEA-COMP:9566"/>
        <dbReference type="ChEBI" id="CHEBI:15378"/>
        <dbReference type="ChEBI" id="CHEBI:16389"/>
        <dbReference type="ChEBI" id="CHEBI:17976"/>
        <dbReference type="ChEBI" id="CHEBI:57540"/>
        <dbReference type="ChEBI" id="CHEBI:57945"/>
        <dbReference type="EC" id="7.1.1.2"/>
    </reaction>
</comment>
<comment type="subcellular location">
    <subcellularLocation>
        <location evidence="1">Mitochondrion inner membrane</location>
        <topology evidence="1">Multi-pass membrane protein</topology>
    </subcellularLocation>
</comment>
<comment type="similarity">
    <text evidence="3">Belongs to the complex I subunit 1 family.</text>
</comment>
<organism>
    <name type="scientific">Anopheles gambiae</name>
    <name type="common">African malaria mosquito</name>
    <dbReference type="NCBI Taxonomy" id="7165"/>
    <lineage>
        <taxon>Eukaryota</taxon>
        <taxon>Metazoa</taxon>
        <taxon>Ecdysozoa</taxon>
        <taxon>Arthropoda</taxon>
        <taxon>Hexapoda</taxon>
        <taxon>Insecta</taxon>
        <taxon>Pterygota</taxon>
        <taxon>Neoptera</taxon>
        <taxon>Endopterygota</taxon>
        <taxon>Diptera</taxon>
        <taxon>Nematocera</taxon>
        <taxon>Culicoidea</taxon>
        <taxon>Culicidae</taxon>
        <taxon>Anophelinae</taxon>
        <taxon>Anopheles</taxon>
    </lineage>
</organism>
<name>NU1M_ANOGA</name>
<dbReference type="EC" id="7.1.1.2"/>
<dbReference type="EMBL" id="L20934">
    <property type="protein sequence ID" value="AAD12202.1"/>
    <property type="molecule type" value="Genomic_DNA"/>
</dbReference>
<dbReference type="PIR" id="T09813">
    <property type="entry name" value="T09813"/>
</dbReference>
<dbReference type="RefSeq" id="NP_008081.1">
    <property type="nucleotide sequence ID" value="NC_002084.1"/>
</dbReference>
<dbReference type="SMR" id="P34846"/>
<dbReference type="FunCoup" id="P34846">
    <property type="interactions" value="139"/>
</dbReference>
<dbReference type="STRING" id="7165.P34846"/>
<dbReference type="PaxDb" id="7165-AGAP028389-PA"/>
<dbReference type="EnsemblMetazoa" id="AGAP028389-RA">
    <property type="protein sequence ID" value="AGAP028389-PA"/>
    <property type="gene ID" value="AGAP028389"/>
</dbReference>
<dbReference type="VEuPathDB" id="VectorBase:AGAMI1_004430"/>
<dbReference type="VEuPathDB" id="VectorBase:AGAP028389"/>
<dbReference type="eggNOG" id="KOG4770">
    <property type="taxonomic scope" value="Eukaryota"/>
</dbReference>
<dbReference type="HOGENOM" id="CLU_015134_0_1_1"/>
<dbReference type="InParanoid" id="P34846"/>
<dbReference type="OMA" id="WSGWASN"/>
<dbReference type="Proteomes" id="UP000007062">
    <property type="component" value="Mitochondrion"/>
</dbReference>
<dbReference type="GO" id="GO:0005743">
    <property type="term" value="C:mitochondrial inner membrane"/>
    <property type="evidence" value="ECO:0007669"/>
    <property type="project" value="UniProtKB-SubCell"/>
</dbReference>
<dbReference type="GO" id="GO:0045271">
    <property type="term" value="C:respiratory chain complex I"/>
    <property type="evidence" value="ECO:0000318"/>
    <property type="project" value="GO_Central"/>
</dbReference>
<dbReference type="GO" id="GO:0008137">
    <property type="term" value="F:NADH dehydrogenase (ubiquinone) activity"/>
    <property type="evidence" value="ECO:0007669"/>
    <property type="project" value="UniProtKB-EC"/>
</dbReference>
<dbReference type="GO" id="GO:0009060">
    <property type="term" value="P:aerobic respiration"/>
    <property type="evidence" value="ECO:0000318"/>
    <property type="project" value="GO_Central"/>
</dbReference>
<dbReference type="HAMAP" id="MF_01350">
    <property type="entry name" value="NDH1_NuoH"/>
    <property type="match status" value="1"/>
</dbReference>
<dbReference type="InterPro" id="IPR001694">
    <property type="entry name" value="NADH_UbQ_OxRdtase_su1/FPO"/>
</dbReference>
<dbReference type="InterPro" id="IPR018086">
    <property type="entry name" value="NADH_UbQ_OxRdtase_su1_CS"/>
</dbReference>
<dbReference type="PANTHER" id="PTHR11432">
    <property type="entry name" value="NADH DEHYDROGENASE SUBUNIT 1"/>
    <property type="match status" value="1"/>
</dbReference>
<dbReference type="PANTHER" id="PTHR11432:SF3">
    <property type="entry name" value="NADH-UBIQUINONE OXIDOREDUCTASE CHAIN 1"/>
    <property type="match status" value="1"/>
</dbReference>
<dbReference type="Pfam" id="PF00146">
    <property type="entry name" value="NADHdh"/>
    <property type="match status" value="1"/>
</dbReference>
<dbReference type="PROSITE" id="PS00667">
    <property type="entry name" value="COMPLEX1_ND1_1"/>
    <property type="match status" value="1"/>
</dbReference>
<dbReference type="PROSITE" id="PS00668">
    <property type="entry name" value="COMPLEX1_ND1_2"/>
    <property type="match status" value="1"/>
</dbReference>
<gene>
    <name type="primary">mt:ND1</name>
    <name type="synonym">ND1</name>
</gene>
<geneLocation type="mitochondrion"/>
<protein>
    <recommendedName>
        <fullName>NADH-ubiquinone oxidoreductase chain 1</fullName>
        <ecNumber>7.1.1.2</ecNumber>
    </recommendedName>
    <alternativeName>
        <fullName>NADH dehydrogenase subunit 1</fullName>
    </alternativeName>
</protein>
<keyword id="KW-0249">Electron transport</keyword>
<keyword id="KW-0472">Membrane</keyword>
<keyword id="KW-0496">Mitochondrion</keyword>
<keyword id="KW-0999">Mitochondrion inner membrane</keyword>
<keyword id="KW-0520">NAD</keyword>
<keyword id="KW-1185">Reference proteome</keyword>
<keyword id="KW-0679">Respiratory chain</keyword>
<keyword id="KW-1278">Translocase</keyword>
<keyword id="KW-0812">Transmembrane</keyword>
<keyword id="KW-1133">Transmembrane helix</keyword>
<keyword id="KW-0813">Transport</keyword>
<keyword id="KW-0830">Ubiquinone</keyword>
<feature type="chain" id="PRO_0000117341" description="NADH-ubiquinone oxidoreductase chain 1">
    <location>
        <begin position="1"/>
        <end position="314"/>
    </location>
</feature>
<feature type="transmembrane region" description="Helical" evidence="2">
    <location>
        <begin position="5"/>
        <end position="25"/>
    </location>
</feature>
<feature type="transmembrane region" description="Helical" evidence="2">
    <location>
        <begin position="78"/>
        <end position="98"/>
    </location>
</feature>
<feature type="transmembrane region" description="Helical" evidence="2">
    <location>
        <begin position="105"/>
        <end position="125"/>
    </location>
</feature>
<feature type="transmembrane region" description="Helical" evidence="2">
    <location>
        <begin position="152"/>
        <end position="172"/>
    </location>
</feature>
<feature type="transmembrane region" description="Helical" evidence="2">
    <location>
        <begin position="176"/>
        <end position="196"/>
    </location>
</feature>
<feature type="transmembrane region" description="Helical" evidence="2">
    <location>
        <begin position="227"/>
        <end position="247"/>
    </location>
</feature>
<feature type="transmembrane region" description="Helical" evidence="2">
    <location>
        <begin position="251"/>
        <end position="271"/>
    </location>
</feature>
<feature type="transmembrane region" description="Helical" evidence="2">
    <location>
        <begin position="294"/>
        <end position="314"/>
    </location>
</feature>
<proteinExistence type="inferred from homology"/>
<accession>P34846</accession>